<accession>A9WC30</accession>
<protein>
    <recommendedName>
        <fullName evidence="1">3-isopropylmalate dehydratase small subunit</fullName>
        <ecNumber evidence="1">4.2.1.33</ecNumber>
    </recommendedName>
    <alternativeName>
        <fullName evidence="1">Alpha-IPM isomerase</fullName>
        <shortName evidence="1">IPMI</shortName>
    </alternativeName>
    <alternativeName>
        <fullName evidence="1">Isopropylmalate isomerase</fullName>
    </alternativeName>
</protein>
<dbReference type="EC" id="4.2.1.33" evidence="1"/>
<dbReference type="EMBL" id="CP000909">
    <property type="protein sequence ID" value="ABY33423.1"/>
    <property type="molecule type" value="Genomic_DNA"/>
</dbReference>
<dbReference type="RefSeq" id="WP_012256079.1">
    <property type="nucleotide sequence ID" value="NC_010175.1"/>
</dbReference>
<dbReference type="RefSeq" id="YP_001633812.1">
    <property type="nucleotide sequence ID" value="NC_010175.1"/>
</dbReference>
<dbReference type="SMR" id="A9WC30"/>
<dbReference type="FunCoup" id="A9WC30">
    <property type="interactions" value="405"/>
</dbReference>
<dbReference type="STRING" id="324602.Caur_0169"/>
<dbReference type="EnsemblBacteria" id="ABY33423">
    <property type="protein sequence ID" value="ABY33423"/>
    <property type="gene ID" value="Caur_0169"/>
</dbReference>
<dbReference type="KEGG" id="cau:Caur_0169"/>
<dbReference type="PATRIC" id="fig|324602.8.peg.193"/>
<dbReference type="eggNOG" id="COG0066">
    <property type="taxonomic scope" value="Bacteria"/>
</dbReference>
<dbReference type="HOGENOM" id="CLU_081378_0_3_0"/>
<dbReference type="InParanoid" id="A9WC30"/>
<dbReference type="UniPathway" id="UPA00048">
    <property type="reaction ID" value="UER00071"/>
</dbReference>
<dbReference type="Proteomes" id="UP000002008">
    <property type="component" value="Chromosome"/>
</dbReference>
<dbReference type="GO" id="GO:0009316">
    <property type="term" value="C:3-isopropylmalate dehydratase complex"/>
    <property type="evidence" value="ECO:0007669"/>
    <property type="project" value="InterPro"/>
</dbReference>
<dbReference type="GO" id="GO:0003861">
    <property type="term" value="F:3-isopropylmalate dehydratase activity"/>
    <property type="evidence" value="ECO:0007669"/>
    <property type="project" value="UniProtKB-UniRule"/>
</dbReference>
<dbReference type="GO" id="GO:0009098">
    <property type="term" value="P:L-leucine biosynthetic process"/>
    <property type="evidence" value="ECO:0007669"/>
    <property type="project" value="UniProtKB-UniRule"/>
</dbReference>
<dbReference type="CDD" id="cd01577">
    <property type="entry name" value="IPMI_Swivel"/>
    <property type="match status" value="1"/>
</dbReference>
<dbReference type="FunFam" id="3.20.19.10:FF:000003">
    <property type="entry name" value="3-isopropylmalate dehydratase small subunit"/>
    <property type="match status" value="1"/>
</dbReference>
<dbReference type="Gene3D" id="3.20.19.10">
    <property type="entry name" value="Aconitase, domain 4"/>
    <property type="match status" value="1"/>
</dbReference>
<dbReference type="HAMAP" id="MF_01031">
    <property type="entry name" value="LeuD_type1"/>
    <property type="match status" value="1"/>
</dbReference>
<dbReference type="InterPro" id="IPR004431">
    <property type="entry name" value="3-IsopropMal_deHydase_ssu"/>
</dbReference>
<dbReference type="InterPro" id="IPR015928">
    <property type="entry name" value="Aconitase/3IPM_dehydase_swvl"/>
</dbReference>
<dbReference type="InterPro" id="IPR000573">
    <property type="entry name" value="AconitaseA/IPMdHydase_ssu_swvl"/>
</dbReference>
<dbReference type="InterPro" id="IPR033940">
    <property type="entry name" value="IPMI_Swivel"/>
</dbReference>
<dbReference type="InterPro" id="IPR050075">
    <property type="entry name" value="LeuD"/>
</dbReference>
<dbReference type="NCBIfam" id="TIGR00171">
    <property type="entry name" value="leuD"/>
    <property type="match status" value="1"/>
</dbReference>
<dbReference type="NCBIfam" id="NF002458">
    <property type="entry name" value="PRK01641.1"/>
    <property type="match status" value="1"/>
</dbReference>
<dbReference type="PANTHER" id="PTHR43345:SF5">
    <property type="entry name" value="3-ISOPROPYLMALATE DEHYDRATASE SMALL SUBUNIT"/>
    <property type="match status" value="1"/>
</dbReference>
<dbReference type="PANTHER" id="PTHR43345">
    <property type="entry name" value="3-ISOPROPYLMALATE DEHYDRATASE SMALL SUBUNIT 2-RELATED-RELATED"/>
    <property type="match status" value="1"/>
</dbReference>
<dbReference type="Pfam" id="PF00694">
    <property type="entry name" value="Aconitase_C"/>
    <property type="match status" value="1"/>
</dbReference>
<dbReference type="SUPFAM" id="SSF52016">
    <property type="entry name" value="LeuD/IlvD-like"/>
    <property type="match status" value="1"/>
</dbReference>
<organism>
    <name type="scientific">Chloroflexus aurantiacus (strain ATCC 29366 / DSM 635 / J-10-fl)</name>
    <dbReference type="NCBI Taxonomy" id="324602"/>
    <lineage>
        <taxon>Bacteria</taxon>
        <taxon>Bacillati</taxon>
        <taxon>Chloroflexota</taxon>
        <taxon>Chloroflexia</taxon>
        <taxon>Chloroflexales</taxon>
        <taxon>Chloroflexineae</taxon>
        <taxon>Chloroflexaceae</taxon>
        <taxon>Chloroflexus</taxon>
    </lineage>
</organism>
<keyword id="KW-0028">Amino-acid biosynthesis</keyword>
<keyword id="KW-0100">Branched-chain amino acid biosynthesis</keyword>
<keyword id="KW-0432">Leucine biosynthesis</keyword>
<keyword id="KW-0456">Lyase</keyword>
<keyword id="KW-1185">Reference proteome</keyword>
<comment type="function">
    <text evidence="1">Catalyzes the isomerization between 2-isopropylmalate and 3-isopropylmalate, via the formation of 2-isopropylmaleate.</text>
</comment>
<comment type="catalytic activity">
    <reaction evidence="1">
        <text>(2R,3S)-3-isopropylmalate = (2S)-2-isopropylmalate</text>
        <dbReference type="Rhea" id="RHEA:32287"/>
        <dbReference type="ChEBI" id="CHEBI:1178"/>
        <dbReference type="ChEBI" id="CHEBI:35121"/>
        <dbReference type="EC" id="4.2.1.33"/>
    </reaction>
</comment>
<comment type="pathway">
    <text evidence="1">Amino-acid biosynthesis; L-leucine biosynthesis; L-leucine from 3-methyl-2-oxobutanoate: step 2/4.</text>
</comment>
<comment type="subunit">
    <text evidence="1">Heterodimer of LeuC and LeuD.</text>
</comment>
<comment type="similarity">
    <text evidence="1">Belongs to the LeuD family. LeuD type 1 subfamily.</text>
</comment>
<gene>
    <name evidence="1" type="primary">leuD</name>
    <name type="ordered locus">Caur_0169</name>
</gene>
<sequence length="201" mass="21993">MEPVSTITGKAVVLPVENIDTDQIIPARFLKVTDRSGLAAGLFEAWRYQADGTPNPDFPLNRPEAAGATILISGRNFGCGSSREHAPWALQDYGFKAVLAPSFADIFRSNSLKIGLLPVTIDQAVYDELVARYAADPQMHLTIDLATQTVTLPDGRQVHFPIDAFSKYCLLHGVDQLGFLLQQEEAIIAYEASHPQPVTTR</sequence>
<reference key="1">
    <citation type="journal article" date="2011" name="BMC Genomics">
        <title>Complete genome sequence of the filamentous anoxygenic phototrophic bacterium Chloroflexus aurantiacus.</title>
        <authorList>
            <person name="Tang K.H."/>
            <person name="Barry K."/>
            <person name="Chertkov O."/>
            <person name="Dalin E."/>
            <person name="Han C.S."/>
            <person name="Hauser L.J."/>
            <person name="Honchak B.M."/>
            <person name="Karbach L.E."/>
            <person name="Land M.L."/>
            <person name="Lapidus A."/>
            <person name="Larimer F.W."/>
            <person name="Mikhailova N."/>
            <person name="Pitluck S."/>
            <person name="Pierson B.K."/>
            <person name="Blankenship R.E."/>
        </authorList>
    </citation>
    <scope>NUCLEOTIDE SEQUENCE [LARGE SCALE GENOMIC DNA]</scope>
    <source>
        <strain>ATCC 29366 / DSM 635 / J-10-fl</strain>
    </source>
</reference>
<name>LEUD_CHLAA</name>
<feature type="chain" id="PRO_1000084248" description="3-isopropylmalate dehydratase small subunit">
    <location>
        <begin position="1"/>
        <end position="201"/>
    </location>
</feature>
<proteinExistence type="inferred from homology"/>
<evidence type="ECO:0000255" key="1">
    <source>
        <dbReference type="HAMAP-Rule" id="MF_01031"/>
    </source>
</evidence>